<accession>A1KHD9</accession>
<comment type="catalytic activity">
    <reaction evidence="1">
        <text>L-arginine + H2O = L-citrulline + NH4(+)</text>
        <dbReference type="Rhea" id="RHEA:19597"/>
        <dbReference type="ChEBI" id="CHEBI:15377"/>
        <dbReference type="ChEBI" id="CHEBI:28938"/>
        <dbReference type="ChEBI" id="CHEBI:32682"/>
        <dbReference type="ChEBI" id="CHEBI:57743"/>
        <dbReference type="EC" id="3.5.3.6"/>
    </reaction>
</comment>
<comment type="pathway">
    <text evidence="1">Amino-acid degradation; L-arginine degradation via ADI pathway; carbamoyl phosphate from L-arginine: step 1/2.</text>
</comment>
<comment type="subcellular location">
    <subcellularLocation>
        <location evidence="1">Cytoplasm</location>
    </subcellularLocation>
</comment>
<comment type="similarity">
    <text evidence="1">Belongs to the arginine deiminase family.</text>
</comment>
<keyword id="KW-0056">Arginine metabolism</keyword>
<keyword id="KW-0963">Cytoplasm</keyword>
<keyword id="KW-0378">Hydrolase</keyword>
<dbReference type="EC" id="3.5.3.6" evidence="1"/>
<dbReference type="EMBL" id="AM408590">
    <property type="protein sequence ID" value="CAL71045.1"/>
    <property type="molecule type" value="Genomic_DNA"/>
</dbReference>
<dbReference type="RefSeq" id="WP_003405169.1">
    <property type="nucleotide sequence ID" value="NC_008769.1"/>
</dbReference>
<dbReference type="SMR" id="A1KHD9"/>
<dbReference type="GeneID" id="45424973"/>
<dbReference type="KEGG" id="mbb:BCG_1058"/>
<dbReference type="HOGENOM" id="CLU_052662_0_1_11"/>
<dbReference type="UniPathway" id="UPA00254">
    <property type="reaction ID" value="UER00364"/>
</dbReference>
<dbReference type="Proteomes" id="UP000001472">
    <property type="component" value="Chromosome"/>
</dbReference>
<dbReference type="GO" id="GO:0005737">
    <property type="term" value="C:cytoplasm"/>
    <property type="evidence" value="ECO:0007669"/>
    <property type="project" value="UniProtKB-SubCell"/>
</dbReference>
<dbReference type="GO" id="GO:0016990">
    <property type="term" value="F:arginine deiminase activity"/>
    <property type="evidence" value="ECO:0007669"/>
    <property type="project" value="UniProtKB-UniRule"/>
</dbReference>
<dbReference type="GO" id="GO:0019547">
    <property type="term" value="P:arginine catabolic process to ornithine"/>
    <property type="evidence" value="ECO:0007669"/>
    <property type="project" value="UniProtKB-UniRule"/>
</dbReference>
<dbReference type="GO" id="GO:0019546">
    <property type="term" value="P:arginine deiminase pathway"/>
    <property type="evidence" value="ECO:0007669"/>
    <property type="project" value="TreeGrafter"/>
</dbReference>
<dbReference type="FunFam" id="1.10.3930.10:FF:000004">
    <property type="entry name" value="Arginine deiminase"/>
    <property type="match status" value="1"/>
</dbReference>
<dbReference type="Gene3D" id="1.10.3930.10">
    <property type="entry name" value="Arginine deiminase"/>
    <property type="match status" value="1"/>
</dbReference>
<dbReference type="Gene3D" id="3.75.10.10">
    <property type="entry name" value="L-arginine/glycine Amidinotransferase, Chain A"/>
    <property type="match status" value="1"/>
</dbReference>
<dbReference type="HAMAP" id="MF_00242">
    <property type="entry name" value="Arg_deiminase"/>
    <property type="match status" value="1"/>
</dbReference>
<dbReference type="InterPro" id="IPR003876">
    <property type="entry name" value="Arg_deiminase"/>
</dbReference>
<dbReference type="NCBIfam" id="TIGR01078">
    <property type="entry name" value="arcA"/>
    <property type="match status" value="1"/>
</dbReference>
<dbReference type="NCBIfam" id="NF002381">
    <property type="entry name" value="PRK01388.1"/>
    <property type="match status" value="1"/>
</dbReference>
<dbReference type="PANTHER" id="PTHR47271">
    <property type="entry name" value="ARGININE DEIMINASE"/>
    <property type="match status" value="1"/>
</dbReference>
<dbReference type="PANTHER" id="PTHR47271:SF2">
    <property type="entry name" value="ARGININE DEIMINASE"/>
    <property type="match status" value="1"/>
</dbReference>
<dbReference type="Pfam" id="PF02274">
    <property type="entry name" value="ADI"/>
    <property type="match status" value="1"/>
</dbReference>
<dbReference type="PIRSF" id="PIRSF006356">
    <property type="entry name" value="Arg_deiminase"/>
    <property type="match status" value="1"/>
</dbReference>
<dbReference type="PRINTS" id="PR01466">
    <property type="entry name" value="ARGDEIMINASE"/>
</dbReference>
<dbReference type="SUPFAM" id="SSF55909">
    <property type="entry name" value="Pentein"/>
    <property type="match status" value="1"/>
</dbReference>
<gene>
    <name evidence="1" type="primary">arcA</name>
    <name type="ordered locus">BCG_1058</name>
</gene>
<reference key="1">
    <citation type="journal article" date="2007" name="Proc. Natl. Acad. Sci. U.S.A.">
        <title>Genome plasticity of BCG and impact on vaccine efficacy.</title>
        <authorList>
            <person name="Brosch R."/>
            <person name="Gordon S.V."/>
            <person name="Garnier T."/>
            <person name="Eiglmeier K."/>
            <person name="Frigui W."/>
            <person name="Valenti P."/>
            <person name="Dos Santos S."/>
            <person name="Duthoy S."/>
            <person name="Lacroix C."/>
            <person name="Garcia-Pelayo C."/>
            <person name="Inwald J.K."/>
            <person name="Golby P."/>
            <person name="Garcia J.N."/>
            <person name="Hewinson R.G."/>
            <person name="Behr M.A."/>
            <person name="Quail M.A."/>
            <person name="Churcher C."/>
            <person name="Barrell B.G."/>
            <person name="Parkhill J."/>
            <person name="Cole S.T."/>
        </authorList>
    </citation>
    <scope>NUCLEOTIDE SEQUENCE [LARGE SCALE GENOMIC DNA]</scope>
    <source>
        <strain>BCG / Pasteur 1173P2</strain>
    </source>
</reference>
<evidence type="ECO:0000255" key="1">
    <source>
        <dbReference type="HAMAP-Rule" id="MF_00242"/>
    </source>
</evidence>
<feature type="chain" id="PRO_1000005717" description="Arginine deiminase">
    <location>
        <begin position="1"/>
        <end position="402"/>
    </location>
</feature>
<feature type="active site" description="Amidino-cysteine intermediate" evidence="1">
    <location>
        <position position="392"/>
    </location>
</feature>
<protein>
    <recommendedName>
        <fullName evidence="1">Arginine deiminase</fullName>
        <shortName evidence="1">ADI</shortName>
        <ecNumber evidence="1">3.5.3.6</ecNumber>
    </recommendedName>
    <alternativeName>
        <fullName evidence="1">Arginine dihydrolase</fullName>
        <shortName evidence="1">AD</shortName>
    </alternativeName>
</protein>
<proteinExistence type="inferred from homology"/>
<sequence>MGVELGSNSEVGALRVVILHRPGAELRRLTPRNTDQLLFDGLPWVSRAQDEHDEFAELLASRGAEVLLLSDLLTEALHHSGAARMQGIAAAVDAPRLGLPLAQELSAYLRSLDPGRLAHVLTAGMTFNELPSDTRTDVSLVLRMHHGGDFVIEPLPNLVFTRDSSIWIGPRVVIPSLALRARVREASLTDLIYAHHPRFTGVRRAYESRTAPVEGGDVLLLAPGVVAVGVGERTTPAGAEALARSLFDDDLAHTVLAVPIAQQRAQMHLDTVCTMVDTDTMVMYANVVDTLEAFTIQRTPDGVTIGDAAPFAEAAAKAMGIDKLRVIHTGMDPVVAEREQWDDGNNTLALAPGVVVAYERNVQTNARLQDAGIEVLTIAGSELGTGRGGPRCMSCPAARDPL</sequence>
<name>ARCA_MYCBP</name>
<organism>
    <name type="scientific">Mycobacterium bovis (strain BCG / Pasteur 1173P2)</name>
    <dbReference type="NCBI Taxonomy" id="410289"/>
    <lineage>
        <taxon>Bacteria</taxon>
        <taxon>Bacillati</taxon>
        <taxon>Actinomycetota</taxon>
        <taxon>Actinomycetes</taxon>
        <taxon>Mycobacteriales</taxon>
        <taxon>Mycobacteriaceae</taxon>
        <taxon>Mycobacterium</taxon>
        <taxon>Mycobacterium tuberculosis complex</taxon>
    </lineage>
</organism>